<name>O161_CONVR</name>
<sequence>MKLTCVLIITVLFLTASQLITADYSRDQRQYRAVRLGDEMRNFKGARDCGGQGEGCYTQPCCPGLRCRGGGTGGGVCQL</sequence>
<reference key="1">
    <citation type="journal article" date="2005" name="Peptides">
        <title>Direct cDNA cloning of novel conopeptide precursors of the O-superfamily.</title>
        <authorList>
            <person name="Kauferstein S."/>
            <person name="Melaun C."/>
            <person name="Mebs D."/>
        </authorList>
    </citation>
    <scope>NUCLEOTIDE SEQUENCE [MRNA]</scope>
    <source>
        <tissue>Venom duct</tissue>
    </source>
</reference>
<reference key="2">
    <citation type="journal article" date="2016" name="Toxicon">
        <title>Glycine-rich conotoxins from the Virgiconus clade.</title>
        <authorList>
            <person name="Espino S.S."/>
            <person name="Dilanyan T."/>
            <person name="Imperial J.S."/>
            <person name="Aguilar M.B."/>
            <person name="Teichert R.W."/>
            <person name="Bandyopadhyay P."/>
            <person name="Olivera B.M."/>
        </authorList>
    </citation>
    <scope>PROTEIN SEQUENCE OF 48-79</scope>
    <scope>FUNCTION</scope>
    <scope>BIOASSAY</scope>
    <scope>SUBCELLULAR LOCATION</scope>
    <scope>SYNTHESIS OF 48-79</scope>
    <scope>HYDROXYLATION AT PRO-60 AND PRO-63</scope>
    <scope>MASS SPECTROMETRY</scope>
    <source>
        <tissue>Venom</tissue>
    </source>
</reference>
<protein>
    <recommendedName>
        <fullName evidence="5">Conotoxin Vi6.1</fullName>
    </recommendedName>
    <alternativeName>
        <fullName evidence="5">Conotoxin vi6a</fullName>
    </alternativeName>
    <alternativeName>
        <fullName evidence="4">virgo 1</fullName>
    </alternativeName>
</protein>
<keyword id="KW-0903">Direct protein sequencing</keyword>
<keyword id="KW-1015">Disulfide bond</keyword>
<keyword id="KW-0379">Hydroxylation</keyword>
<keyword id="KW-0872">Ion channel impairing toxin</keyword>
<keyword id="KW-0960">Knottin</keyword>
<keyword id="KW-0964">Secreted</keyword>
<keyword id="KW-0732">Signal</keyword>
<keyword id="KW-0800">Toxin</keyword>
<evidence type="ECO:0000250" key="1">
    <source>
        <dbReference type="UniProtKB" id="P60179"/>
    </source>
</evidence>
<evidence type="ECO:0000255" key="2"/>
<evidence type="ECO:0000269" key="3">
    <source>
    </source>
</evidence>
<evidence type="ECO:0000303" key="4">
    <source>
    </source>
</evidence>
<evidence type="ECO:0000303" key="5">
    <source>
    </source>
</evidence>
<evidence type="ECO:0000305" key="6"/>
<evidence type="ECO:0000305" key="7">
    <source>
    </source>
</evidence>
<comment type="function">
    <text evidence="3">Ion channel inhibitor that inhibits the increase in intracellular calcium upon depolarization in DRG neurons. In vivo, both intraperitoneal and intracranial injections into mice induce hyperactivity.</text>
</comment>
<comment type="subcellular location">
    <subcellularLocation>
        <location evidence="7">Secreted</location>
    </subcellularLocation>
</comment>
<comment type="tissue specificity">
    <text evidence="7">Expressed by the venom duct.</text>
</comment>
<comment type="domain">
    <text evidence="6">The presence of a 'disulfide through disulfide knot' structurally defines this protein as a knottin.</text>
</comment>
<comment type="domain">
    <text evidence="6">The cysteine framework is VI/VII (C-C-CC-C-C).</text>
</comment>
<comment type="mass spectrometry"/>
<comment type="similarity">
    <text evidence="6">Belongs to the conotoxin O1 superfamily.</text>
</comment>
<dbReference type="EMBL" id="AJ851181">
    <property type="protein sequence ID" value="CAH64854.1"/>
    <property type="molecule type" value="mRNA"/>
</dbReference>
<dbReference type="EMBL" id="AJ851182">
    <property type="protein sequence ID" value="CAH64855.1"/>
    <property type="molecule type" value="mRNA"/>
</dbReference>
<dbReference type="SMR" id="Q5K0C7"/>
<dbReference type="ConoServer" id="1070">
    <property type="toxin name" value="Vi6.1 precursor"/>
</dbReference>
<dbReference type="GO" id="GO:0005576">
    <property type="term" value="C:extracellular region"/>
    <property type="evidence" value="ECO:0007669"/>
    <property type="project" value="UniProtKB-SubCell"/>
</dbReference>
<dbReference type="GO" id="GO:0008200">
    <property type="term" value="F:ion channel inhibitor activity"/>
    <property type="evidence" value="ECO:0007669"/>
    <property type="project" value="InterPro"/>
</dbReference>
<dbReference type="GO" id="GO:0090729">
    <property type="term" value="F:toxin activity"/>
    <property type="evidence" value="ECO:0007669"/>
    <property type="project" value="UniProtKB-KW"/>
</dbReference>
<dbReference type="InterPro" id="IPR004214">
    <property type="entry name" value="Conotoxin"/>
</dbReference>
<dbReference type="Pfam" id="PF02950">
    <property type="entry name" value="Conotoxin"/>
    <property type="match status" value="1"/>
</dbReference>
<accession>Q5K0C7</accession>
<feature type="signal peptide" evidence="2">
    <location>
        <begin position="1"/>
        <end position="22"/>
    </location>
</feature>
<feature type="propeptide" id="PRO_0000034997" evidence="7">
    <location>
        <begin position="23"/>
        <end position="47"/>
    </location>
</feature>
<feature type="peptide" id="PRO_0000034998" description="Conotoxin Vi6.1" evidence="3">
    <location>
        <begin position="48"/>
        <end position="79"/>
    </location>
</feature>
<feature type="modified residue" description="4-hydroxyproline" evidence="3">
    <location>
        <position position="60"/>
    </location>
</feature>
<feature type="modified residue" description="4-hydroxyproline" evidence="3">
    <location>
        <position position="63"/>
    </location>
</feature>
<feature type="disulfide bond" evidence="1">
    <location>
        <begin position="49"/>
        <end position="62"/>
    </location>
</feature>
<feature type="disulfide bond" evidence="1">
    <location>
        <begin position="56"/>
        <end position="67"/>
    </location>
</feature>
<feature type="disulfide bond" evidence="1">
    <location>
        <begin position="61"/>
        <end position="77"/>
    </location>
</feature>
<organism>
    <name type="scientific">Conus virgo</name>
    <name type="common">Virgin cone</name>
    <dbReference type="NCBI Taxonomy" id="89427"/>
    <lineage>
        <taxon>Eukaryota</taxon>
        <taxon>Metazoa</taxon>
        <taxon>Spiralia</taxon>
        <taxon>Lophotrochozoa</taxon>
        <taxon>Mollusca</taxon>
        <taxon>Gastropoda</taxon>
        <taxon>Caenogastropoda</taxon>
        <taxon>Neogastropoda</taxon>
        <taxon>Conoidea</taxon>
        <taxon>Conidae</taxon>
        <taxon>Conus</taxon>
        <taxon>Virgiconus</taxon>
    </lineage>
</organism>
<proteinExistence type="evidence at protein level"/>